<evidence type="ECO:0000255" key="1">
    <source>
        <dbReference type="HAMAP-Rule" id="MF_00116"/>
    </source>
</evidence>
<dbReference type="EC" id="3.6.1.23" evidence="1"/>
<dbReference type="EMBL" id="CP000673">
    <property type="protein sequence ID" value="EDK33186.1"/>
    <property type="molecule type" value="Genomic_DNA"/>
</dbReference>
<dbReference type="RefSeq" id="WP_012101523.1">
    <property type="nucleotide sequence ID" value="NC_009706.1"/>
</dbReference>
<dbReference type="SMR" id="A5N7A5"/>
<dbReference type="STRING" id="431943.CKL_1144"/>
<dbReference type="KEGG" id="ckl:CKL_1144"/>
<dbReference type="eggNOG" id="COG0756">
    <property type="taxonomic scope" value="Bacteria"/>
</dbReference>
<dbReference type="HOGENOM" id="CLU_068508_1_2_9"/>
<dbReference type="UniPathway" id="UPA00610">
    <property type="reaction ID" value="UER00666"/>
</dbReference>
<dbReference type="Proteomes" id="UP000002411">
    <property type="component" value="Chromosome"/>
</dbReference>
<dbReference type="GO" id="GO:0004170">
    <property type="term" value="F:dUTP diphosphatase activity"/>
    <property type="evidence" value="ECO:0007669"/>
    <property type="project" value="UniProtKB-UniRule"/>
</dbReference>
<dbReference type="GO" id="GO:0000287">
    <property type="term" value="F:magnesium ion binding"/>
    <property type="evidence" value="ECO:0007669"/>
    <property type="project" value="UniProtKB-UniRule"/>
</dbReference>
<dbReference type="GO" id="GO:0006226">
    <property type="term" value="P:dUMP biosynthetic process"/>
    <property type="evidence" value="ECO:0007669"/>
    <property type="project" value="UniProtKB-UniRule"/>
</dbReference>
<dbReference type="GO" id="GO:0046081">
    <property type="term" value="P:dUTP catabolic process"/>
    <property type="evidence" value="ECO:0007669"/>
    <property type="project" value="InterPro"/>
</dbReference>
<dbReference type="CDD" id="cd07557">
    <property type="entry name" value="trimeric_dUTPase"/>
    <property type="match status" value="1"/>
</dbReference>
<dbReference type="FunFam" id="2.70.40.10:FF:000008">
    <property type="entry name" value="Deoxyuridine 5'-triphosphate nucleotidohydrolase"/>
    <property type="match status" value="1"/>
</dbReference>
<dbReference type="Gene3D" id="2.70.40.10">
    <property type="match status" value="1"/>
</dbReference>
<dbReference type="HAMAP" id="MF_00116">
    <property type="entry name" value="dUTPase_bact"/>
    <property type="match status" value="1"/>
</dbReference>
<dbReference type="InterPro" id="IPR008181">
    <property type="entry name" value="dUTPase"/>
</dbReference>
<dbReference type="InterPro" id="IPR029054">
    <property type="entry name" value="dUTPase-like"/>
</dbReference>
<dbReference type="InterPro" id="IPR036157">
    <property type="entry name" value="dUTPase-like_sf"/>
</dbReference>
<dbReference type="InterPro" id="IPR033704">
    <property type="entry name" value="dUTPase_trimeric"/>
</dbReference>
<dbReference type="NCBIfam" id="TIGR00576">
    <property type="entry name" value="dut"/>
    <property type="match status" value="1"/>
</dbReference>
<dbReference type="NCBIfam" id="NF001862">
    <property type="entry name" value="PRK00601.1"/>
    <property type="match status" value="1"/>
</dbReference>
<dbReference type="PANTHER" id="PTHR11241">
    <property type="entry name" value="DEOXYURIDINE 5'-TRIPHOSPHATE NUCLEOTIDOHYDROLASE"/>
    <property type="match status" value="1"/>
</dbReference>
<dbReference type="PANTHER" id="PTHR11241:SF0">
    <property type="entry name" value="DEOXYURIDINE 5'-TRIPHOSPHATE NUCLEOTIDOHYDROLASE"/>
    <property type="match status" value="1"/>
</dbReference>
<dbReference type="Pfam" id="PF00692">
    <property type="entry name" value="dUTPase"/>
    <property type="match status" value="1"/>
</dbReference>
<dbReference type="SUPFAM" id="SSF51283">
    <property type="entry name" value="dUTPase-like"/>
    <property type="match status" value="1"/>
</dbReference>
<organism>
    <name type="scientific">Clostridium kluyveri (strain ATCC 8527 / DSM 555 / NBRC 12016 / NCIMB 10680 / K1)</name>
    <dbReference type="NCBI Taxonomy" id="431943"/>
    <lineage>
        <taxon>Bacteria</taxon>
        <taxon>Bacillati</taxon>
        <taxon>Bacillota</taxon>
        <taxon>Clostridia</taxon>
        <taxon>Eubacteriales</taxon>
        <taxon>Clostridiaceae</taxon>
        <taxon>Clostridium</taxon>
    </lineage>
</organism>
<proteinExistence type="inferred from homology"/>
<name>DUT_CLOK5</name>
<gene>
    <name evidence="1" type="primary">dut</name>
    <name type="ordered locus">CKL_1144</name>
</gene>
<sequence length="143" mass="15680">MELLVKRINKEAILPFYAHEGDAGLDLFSVEEVLIKPMERKLIATGIKIQLPPNTEGQVRPRSGLALAHGITLLNSPGTIDEGYRGEIKVLMINLGQEGFLIKKGMKIAQMVIKPIEQVLIKEVVELKDTERGEGGFGSTGTM</sequence>
<feature type="chain" id="PRO_1000076054" description="Deoxyuridine 5'-triphosphate nucleotidohydrolase">
    <location>
        <begin position="1"/>
        <end position="143"/>
    </location>
</feature>
<feature type="binding site" evidence="1">
    <location>
        <begin position="62"/>
        <end position="64"/>
    </location>
    <ligand>
        <name>substrate</name>
    </ligand>
</feature>
<feature type="binding site" evidence="1">
    <location>
        <position position="75"/>
    </location>
    <ligand>
        <name>substrate</name>
    </ligand>
</feature>
<feature type="binding site" evidence="1">
    <location>
        <begin position="79"/>
        <end position="81"/>
    </location>
    <ligand>
        <name>substrate</name>
    </ligand>
</feature>
<feature type="binding site" evidence="1">
    <location>
        <position position="89"/>
    </location>
    <ligand>
        <name>substrate</name>
    </ligand>
</feature>
<protein>
    <recommendedName>
        <fullName evidence="1">Deoxyuridine 5'-triphosphate nucleotidohydrolase</fullName>
        <shortName evidence="1">dUTPase</shortName>
        <ecNumber evidence="1">3.6.1.23</ecNumber>
    </recommendedName>
    <alternativeName>
        <fullName evidence="1">dUTP pyrophosphatase</fullName>
    </alternativeName>
</protein>
<keyword id="KW-0378">Hydrolase</keyword>
<keyword id="KW-0460">Magnesium</keyword>
<keyword id="KW-0479">Metal-binding</keyword>
<keyword id="KW-0546">Nucleotide metabolism</keyword>
<keyword id="KW-1185">Reference proteome</keyword>
<accession>A5N7A5</accession>
<comment type="function">
    <text evidence="1">This enzyme is involved in nucleotide metabolism: it produces dUMP, the immediate precursor of thymidine nucleotides and it decreases the intracellular concentration of dUTP so that uracil cannot be incorporated into DNA.</text>
</comment>
<comment type="catalytic activity">
    <reaction evidence="1">
        <text>dUTP + H2O = dUMP + diphosphate + H(+)</text>
        <dbReference type="Rhea" id="RHEA:10248"/>
        <dbReference type="ChEBI" id="CHEBI:15377"/>
        <dbReference type="ChEBI" id="CHEBI:15378"/>
        <dbReference type="ChEBI" id="CHEBI:33019"/>
        <dbReference type="ChEBI" id="CHEBI:61555"/>
        <dbReference type="ChEBI" id="CHEBI:246422"/>
        <dbReference type="EC" id="3.6.1.23"/>
    </reaction>
</comment>
<comment type="cofactor">
    <cofactor evidence="1">
        <name>Mg(2+)</name>
        <dbReference type="ChEBI" id="CHEBI:18420"/>
    </cofactor>
</comment>
<comment type="pathway">
    <text evidence="1">Pyrimidine metabolism; dUMP biosynthesis; dUMP from dCTP (dUTP route): step 2/2.</text>
</comment>
<comment type="similarity">
    <text evidence="1">Belongs to the dUTPase family.</text>
</comment>
<reference key="1">
    <citation type="journal article" date="2008" name="Proc. Natl. Acad. Sci. U.S.A.">
        <title>The genome of Clostridium kluyveri, a strict anaerobe with unique metabolic features.</title>
        <authorList>
            <person name="Seedorf H."/>
            <person name="Fricke W.F."/>
            <person name="Veith B."/>
            <person name="Brueggemann H."/>
            <person name="Liesegang H."/>
            <person name="Strittmatter A."/>
            <person name="Miethke M."/>
            <person name="Buckel W."/>
            <person name="Hinderberger J."/>
            <person name="Li F."/>
            <person name="Hagemeier C."/>
            <person name="Thauer R.K."/>
            <person name="Gottschalk G."/>
        </authorList>
    </citation>
    <scope>NUCLEOTIDE SEQUENCE [LARGE SCALE GENOMIC DNA]</scope>
    <source>
        <strain>ATCC 8527 / DSM 555 / NBRC 12016 / NCIMB 10680 / K1</strain>
    </source>
</reference>